<name>SRL2_ORYSJ</name>
<dbReference type="EMBL" id="DP000009">
    <property type="protein sequence ID" value="ABF95547.1"/>
    <property type="molecule type" value="Genomic_DNA"/>
</dbReference>
<dbReference type="EMBL" id="DP000009">
    <property type="protein sequence ID" value="ABF95548.1"/>
    <property type="status" value="ALT_SEQ"/>
    <property type="molecule type" value="Genomic_DNA"/>
</dbReference>
<dbReference type="EMBL" id="AP008209">
    <property type="protein sequence ID" value="BAF11817.1"/>
    <property type="molecule type" value="Genomic_DNA"/>
</dbReference>
<dbReference type="EMBL" id="AP014959">
    <property type="protein sequence ID" value="BAS83832.1"/>
    <property type="molecule type" value="Genomic_DNA"/>
</dbReference>
<dbReference type="EMBL" id="AK072741">
    <property type="protein sequence ID" value="BAG93123.1"/>
    <property type="molecule type" value="mRNA"/>
</dbReference>
<dbReference type="FunCoup" id="Q10MI0">
    <property type="interactions" value="1021"/>
</dbReference>
<dbReference type="STRING" id="39947.Q10MI0"/>
<dbReference type="PaxDb" id="39947-Q10MI0"/>
<dbReference type="EnsemblPlants" id="Os03t0308200-01">
    <property type="protein sequence ID" value="Os03t0308200-01"/>
    <property type="gene ID" value="Os03g0308200"/>
</dbReference>
<dbReference type="Gramene" id="Os03t0308200-01">
    <property type="protein sequence ID" value="Os03t0308200-01"/>
    <property type="gene ID" value="Os03g0308200"/>
</dbReference>
<dbReference type="KEGG" id="dosa:Os03g0308200"/>
<dbReference type="KEGG" id="osa:4332616"/>
<dbReference type="eggNOG" id="KOG1877">
    <property type="taxonomic scope" value="Eukaryota"/>
</dbReference>
<dbReference type="HOGENOM" id="CLU_006993_1_0_1"/>
<dbReference type="InParanoid" id="Q10MI0"/>
<dbReference type="OMA" id="FDKKKQW"/>
<dbReference type="OrthoDB" id="19232at2759"/>
<dbReference type="Proteomes" id="UP000000763">
    <property type="component" value="Chromosome 3"/>
</dbReference>
<dbReference type="Proteomes" id="UP000059680">
    <property type="component" value="Chromosome 3"/>
</dbReference>
<dbReference type="ExpressionAtlas" id="Q10MI0">
    <property type="expression patterns" value="baseline and differential"/>
</dbReference>
<dbReference type="GO" id="GO:0005737">
    <property type="term" value="C:cytoplasm"/>
    <property type="evidence" value="ECO:0007669"/>
    <property type="project" value="UniProtKB-SubCell"/>
</dbReference>
<dbReference type="GO" id="GO:0005634">
    <property type="term" value="C:nucleus"/>
    <property type="evidence" value="ECO:0007669"/>
    <property type="project" value="UniProtKB-SubCell"/>
</dbReference>
<dbReference type="GO" id="GO:0005886">
    <property type="term" value="C:plasma membrane"/>
    <property type="evidence" value="ECO:0007669"/>
    <property type="project" value="EnsemblPlants"/>
</dbReference>
<dbReference type="GO" id="GO:0030154">
    <property type="term" value="P:cell differentiation"/>
    <property type="evidence" value="ECO:0007669"/>
    <property type="project" value="UniProtKB-KW"/>
</dbReference>
<dbReference type="GO" id="GO:0009555">
    <property type="term" value="P:pollen development"/>
    <property type="evidence" value="ECO:0007669"/>
    <property type="project" value="EnsemblPlants"/>
</dbReference>
<dbReference type="InterPro" id="IPR016024">
    <property type="entry name" value="ARM-type_fold"/>
</dbReference>
<dbReference type="InterPro" id="IPR049152">
    <property type="entry name" value="EFR3-like_ARM"/>
</dbReference>
<dbReference type="InterPro" id="IPR055296">
    <property type="entry name" value="SRL2-like"/>
</dbReference>
<dbReference type="PANTHER" id="PTHR46087:SF11">
    <property type="entry name" value="PROTEIN SEMI-ROLLED LEAF 2"/>
    <property type="match status" value="1"/>
</dbReference>
<dbReference type="PANTHER" id="PTHR46087">
    <property type="entry name" value="PUTATIVE, EXPRESSED-RELATED"/>
    <property type="match status" value="1"/>
</dbReference>
<dbReference type="Pfam" id="PF21052">
    <property type="entry name" value="EFR3_ARM"/>
    <property type="match status" value="1"/>
</dbReference>
<dbReference type="SUPFAM" id="SSF48371">
    <property type="entry name" value="ARM repeat"/>
    <property type="match status" value="1"/>
</dbReference>
<accession>Q10MI0</accession>
<accession>Q10MH9</accession>
<comment type="function">
    <text evidence="2">Functions in regulating leaf rolling through abaxial side leaf cell differentiation (PubMed:26873975). May be involved in the transdifferentiation process from mesophyll cells to sclerenchymatous cells (PubMed:26873975).</text>
</comment>
<comment type="subcellular location">
    <subcellularLocation>
        <location evidence="2">Nucleus</location>
    </subcellularLocation>
    <subcellularLocation>
        <location evidence="2">Cytoplasm</location>
    </subcellularLocation>
</comment>
<comment type="tissue specificity">
    <text evidence="2">Expressed in root tips, and in the vascular bundles of leaf blades, leaf sheaths, and roots, especially in their sclerenchymatous cells.</text>
</comment>
<comment type="disruption phenotype">
    <text evidence="2">Inward rolled leaves due to the presence of defective sclerenchymatous cells on the abaxial side of the leaf (PubMed:26873975). Narrow leaves and reduced plant height (PubMed:26873975).</text>
</comment>
<comment type="sequence caution" evidence="4">
    <conflict type="erroneous gene model prediction">
        <sequence resource="EMBL-CDS" id="ABF95548"/>
    </conflict>
</comment>
<organism>
    <name type="scientific">Oryza sativa subsp. japonica</name>
    <name type="common">Rice</name>
    <dbReference type="NCBI Taxonomy" id="39947"/>
    <lineage>
        <taxon>Eukaryota</taxon>
        <taxon>Viridiplantae</taxon>
        <taxon>Streptophyta</taxon>
        <taxon>Embryophyta</taxon>
        <taxon>Tracheophyta</taxon>
        <taxon>Spermatophyta</taxon>
        <taxon>Magnoliopsida</taxon>
        <taxon>Liliopsida</taxon>
        <taxon>Poales</taxon>
        <taxon>Poaceae</taxon>
        <taxon>BOP clade</taxon>
        <taxon>Oryzoideae</taxon>
        <taxon>Oryzeae</taxon>
        <taxon>Oryzinae</taxon>
        <taxon>Oryza</taxon>
        <taxon>Oryza sativa</taxon>
    </lineage>
</organism>
<gene>
    <name evidence="3" type="primary">SRL2</name>
    <name evidence="5" type="ordered locus">LOC_Os03g19520</name>
    <name evidence="6" type="ordered locus">Os03g0308200</name>
</gene>
<reference key="1">
    <citation type="journal article" date="2005" name="Genome Res.">
        <title>Sequence, annotation, and analysis of synteny between rice chromosome 3 and diverged grass species.</title>
        <authorList>
            <consortium name="The rice chromosome 3 sequencing consortium"/>
            <person name="Buell C.R."/>
            <person name="Yuan Q."/>
            <person name="Ouyang S."/>
            <person name="Liu J."/>
            <person name="Zhu W."/>
            <person name="Wang A."/>
            <person name="Maiti R."/>
            <person name="Haas B."/>
            <person name="Wortman J."/>
            <person name="Pertea M."/>
            <person name="Jones K.M."/>
            <person name="Kim M."/>
            <person name="Overton L."/>
            <person name="Tsitrin T."/>
            <person name="Fadrosh D."/>
            <person name="Bera J."/>
            <person name="Weaver B."/>
            <person name="Jin S."/>
            <person name="Johri S."/>
            <person name="Reardon M."/>
            <person name="Webb K."/>
            <person name="Hill J."/>
            <person name="Moffat K."/>
            <person name="Tallon L."/>
            <person name="Van Aken S."/>
            <person name="Lewis M."/>
            <person name="Utterback T."/>
            <person name="Feldblyum T."/>
            <person name="Zismann V."/>
            <person name="Iobst S."/>
            <person name="Hsiao J."/>
            <person name="de Vazeille A.R."/>
            <person name="Salzberg S.L."/>
            <person name="White O."/>
            <person name="Fraser C.M."/>
            <person name="Yu Y."/>
            <person name="Kim H."/>
            <person name="Rambo T."/>
            <person name="Currie J."/>
            <person name="Collura K."/>
            <person name="Kernodle-Thompson S."/>
            <person name="Wei F."/>
            <person name="Kudrna K."/>
            <person name="Ammiraju J.S.S."/>
            <person name="Luo M."/>
            <person name="Goicoechea J.L."/>
            <person name="Wing R.A."/>
            <person name="Henry D."/>
            <person name="Oates R."/>
            <person name="Palmer M."/>
            <person name="Pries G."/>
            <person name="Saski C."/>
            <person name="Simmons J."/>
            <person name="Soderlund C."/>
            <person name="Nelson W."/>
            <person name="de la Bastide M."/>
            <person name="Spiegel L."/>
            <person name="Nascimento L."/>
            <person name="Huang E."/>
            <person name="Preston R."/>
            <person name="Zutavern T."/>
            <person name="Palmer L."/>
            <person name="O'Shaughnessy A."/>
            <person name="Dike S."/>
            <person name="McCombie W.R."/>
            <person name="Minx P."/>
            <person name="Cordum H."/>
            <person name="Wilson R."/>
            <person name="Jin W."/>
            <person name="Lee H.R."/>
            <person name="Jiang J."/>
            <person name="Jackson S."/>
        </authorList>
    </citation>
    <scope>NUCLEOTIDE SEQUENCE [LARGE SCALE GENOMIC DNA]</scope>
    <source>
        <strain>cv. Nipponbare</strain>
    </source>
</reference>
<reference key="2">
    <citation type="journal article" date="2005" name="Nature">
        <title>The map-based sequence of the rice genome.</title>
        <authorList>
            <consortium name="International rice genome sequencing project (IRGSP)"/>
        </authorList>
    </citation>
    <scope>NUCLEOTIDE SEQUENCE [LARGE SCALE GENOMIC DNA]</scope>
    <source>
        <strain>cv. Nipponbare</strain>
    </source>
</reference>
<reference key="3">
    <citation type="journal article" date="2008" name="Nucleic Acids Res.">
        <title>The rice annotation project database (RAP-DB): 2008 update.</title>
        <authorList>
            <consortium name="The rice annotation project (RAP)"/>
        </authorList>
    </citation>
    <scope>GENOME REANNOTATION</scope>
    <source>
        <strain>cv. Nipponbare</strain>
    </source>
</reference>
<reference key="4">
    <citation type="journal article" date="2013" name="Rice">
        <title>Improvement of the Oryza sativa Nipponbare reference genome using next generation sequence and optical map data.</title>
        <authorList>
            <person name="Kawahara Y."/>
            <person name="de la Bastide M."/>
            <person name="Hamilton J.P."/>
            <person name="Kanamori H."/>
            <person name="McCombie W.R."/>
            <person name="Ouyang S."/>
            <person name="Schwartz D.C."/>
            <person name="Tanaka T."/>
            <person name="Wu J."/>
            <person name="Zhou S."/>
            <person name="Childs K.L."/>
            <person name="Davidson R.M."/>
            <person name="Lin H."/>
            <person name="Quesada-Ocampo L."/>
            <person name="Vaillancourt B."/>
            <person name="Sakai H."/>
            <person name="Lee S.S."/>
            <person name="Kim J."/>
            <person name="Numa H."/>
            <person name="Itoh T."/>
            <person name="Buell C.R."/>
            <person name="Matsumoto T."/>
        </authorList>
    </citation>
    <scope>GENOME REANNOTATION</scope>
    <source>
        <strain>cv. Nipponbare</strain>
    </source>
</reference>
<reference key="5">
    <citation type="journal article" date="2003" name="Science">
        <title>Collection, mapping, and annotation of over 28,000 cDNA clones from japonica rice.</title>
        <authorList>
            <consortium name="The rice full-length cDNA consortium"/>
        </authorList>
    </citation>
    <scope>NUCLEOTIDE SEQUENCE [LARGE SCALE MRNA]</scope>
    <source>
        <strain>cv. Nipponbare</strain>
    </source>
</reference>
<reference key="6">
    <citation type="journal article" date="2016" name="J. Exp. Bot.">
        <title>Semi-Rolled Leaf2 modulates rice leaf rolling by regulating abaxial side cell differentiation.</title>
        <authorList>
            <person name="Liu X."/>
            <person name="Li M."/>
            <person name="Liu K."/>
            <person name="Tang D."/>
            <person name="Sun M."/>
            <person name="Li Y."/>
            <person name="Shen Y."/>
            <person name="Du G."/>
            <person name="Cheng Z."/>
        </authorList>
    </citation>
    <scope>FUNCTION</scope>
    <scope>SUBCELLULAR LOCATION</scope>
    <scope>TISSUE SPECIFICITY</scope>
    <scope>DISRUPTION PHENOTYPE</scope>
</reference>
<protein>
    <recommendedName>
        <fullName evidence="3">Protein SEMI-ROLLED LEAF 2</fullName>
    </recommendedName>
</protein>
<evidence type="ECO:0000256" key="1">
    <source>
        <dbReference type="SAM" id="MobiDB-lite"/>
    </source>
</evidence>
<evidence type="ECO:0000269" key="2">
    <source>
    </source>
</evidence>
<evidence type="ECO:0000303" key="3">
    <source>
    </source>
</evidence>
<evidence type="ECO:0000305" key="4"/>
<evidence type="ECO:0000312" key="5">
    <source>
        <dbReference type="EMBL" id="ABF95547.1"/>
    </source>
</evidence>
<evidence type="ECO:0000312" key="6">
    <source>
        <dbReference type="EMBL" id="BAF11817.1"/>
    </source>
</evidence>
<sequence>MGFMSAKLFPSCESMCVCCPALRPSSRRPVKRYKKLLAEIFPKTPDGLPNERKIMKLCEYAAKNPLRIPKIAKFLEQRSHKELRSAHVNFIKIITEAYSKLLFICKEQMAYFAISLVNVLTELLESKQENIHILGCQTLAKFIYSQVDNTYARNIESLVRKVCVLSRQQGVEHSLLRAASLQCLSAMIWFMKEHSYIFVDFDEIVQSVLENYRVEESAAGDEERHAPQHNWVDEIVRREGRAGLGGGNDVNCNSTAIRLRSARDSSALTREERESPEVWAHICVQKLAELAKESTTMRRILDPMLSYFDKKKQWAPRQGLALLVLSDMSYLEKSSGNEQLILTSVIRHLDHKNVLYDPQIKSDMIQTATLLARQLRSRGIAAELVVAGDLCRHLRKTLEAMESASIEELNLNESLQNFLQDCLLEVVTGINDVRPLYDMMAITLENLPSMPVVARASIGSLLILSHIISLTSMSLNAPMLFPEALLQQILKSMVHPDVDTRVGAHHMFSAVIVQGPSRQRSESDFLYETKKWQSRTTSVFASATALLEKLRREKESLGSDKTGNMDDEKEKSISEEENKHVWARKNSAYFSKLVFSFTDRYAALTSSAEEANIVMLTEDQKNQLLSAFWVQAIQTDNTPFNYEAIGHSYSLTVISSRLKDSRNSNNIQFFQLPLSLRSVSLTSNGVLSPSCQRSIFTLATSMLAFAGKVCHITELFDVLRCFTSCNMDPYLRIGEDLQLYVRLQSDLGNYGSDSDQEIARSVLSDCRTKVGINDQRVLDVVACALCNLTEMDKDVLVKELTEMFTPEEVPLFGSNSAFDWANFHVQAFSDESLSFDEECSRTSSVDGGLHESPITNTGSSISKTTMPQSVPRVLGVGQLLESALHVAGQVAGASVSTSPLPYGTMTSQCEALGSGTRKKLSSWLVNGHDSTPDNPAPSLPSAQHFIIPKVNSCGFESSIRTTLEPCSAVKLPPASPFDNFLKAAYRAQ</sequence>
<keyword id="KW-0963">Cytoplasm</keyword>
<keyword id="KW-0217">Developmental protein</keyword>
<keyword id="KW-0221">Differentiation</keyword>
<keyword id="KW-0539">Nucleus</keyword>
<keyword id="KW-1185">Reference proteome</keyword>
<feature type="chain" id="PRO_0000448357" description="Protein SEMI-ROLLED LEAF 2">
    <location>
        <begin position="1"/>
        <end position="988"/>
    </location>
</feature>
<feature type="region of interest" description="Disordered" evidence="1">
    <location>
        <begin position="844"/>
        <end position="865"/>
    </location>
</feature>
<feature type="compositionally biased region" description="Polar residues" evidence="1">
    <location>
        <begin position="853"/>
        <end position="865"/>
    </location>
</feature>
<proteinExistence type="evidence at transcript level"/>